<accession>A4J139</accession>
<reference key="1">
    <citation type="submission" date="2007-03" db="EMBL/GenBank/DDBJ databases">
        <title>Complete sequence of Desulfotomaculum reducens MI-1.</title>
        <authorList>
            <consortium name="US DOE Joint Genome Institute"/>
            <person name="Copeland A."/>
            <person name="Lucas S."/>
            <person name="Lapidus A."/>
            <person name="Barry K."/>
            <person name="Detter J.C."/>
            <person name="Glavina del Rio T."/>
            <person name="Hammon N."/>
            <person name="Israni S."/>
            <person name="Dalin E."/>
            <person name="Tice H."/>
            <person name="Pitluck S."/>
            <person name="Sims D."/>
            <person name="Brettin T."/>
            <person name="Bruce D."/>
            <person name="Han C."/>
            <person name="Tapia R."/>
            <person name="Schmutz J."/>
            <person name="Larimer F."/>
            <person name="Land M."/>
            <person name="Hauser L."/>
            <person name="Kyrpides N."/>
            <person name="Kim E."/>
            <person name="Tebo B.M."/>
            <person name="Richardson P."/>
        </authorList>
    </citation>
    <scope>NUCLEOTIDE SEQUENCE [LARGE SCALE GENOMIC DNA]</scope>
    <source>
        <strain>ATCC BAA-1160 / DSM 100696 / MI-1</strain>
    </source>
</reference>
<proteinExistence type="inferred from homology"/>
<organism>
    <name type="scientific">Desulforamulus reducens (strain ATCC BAA-1160 / DSM 100696 / MI-1)</name>
    <name type="common">Desulfotomaculum reducens</name>
    <dbReference type="NCBI Taxonomy" id="349161"/>
    <lineage>
        <taxon>Bacteria</taxon>
        <taxon>Bacillati</taxon>
        <taxon>Bacillota</taxon>
        <taxon>Clostridia</taxon>
        <taxon>Eubacteriales</taxon>
        <taxon>Peptococcaceae</taxon>
        <taxon>Desulforamulus</taxon>
    </lineage>
</organism>
<comment type="function">
    <text evidence="1">DNA-dependent RNA polymerase catalyzes the transcription of DNA into RNA using the four ribonucleoside triphosphates as substrates.</text>
</comment>
<comment type="catalytic activity">
    <reaction evidence="1">
        <text>RNA(n) + a ribonucleoside 5'-triphosphate = RNA(n+1) + diphosphate</text>
        <dbReference type="Rhea" id="RHEA:21248"/>
        <dbReference type="Rhea" id="RHEA-COMP:14527"/>
        <dbReference type="Rhea" id="RHEA-COMP:17342"/>
        <dbReference type="ChEBI" id="CHEBI:33019"/>
        <dbReference type="ChEBI" id="CHEBI:61557"/>
        <dbReference type="ChEBI" id="CHEBI:140395"/>
        <dbReference type="EC" id="2.7.7.6"/>
    </reaction>
</comment>
<comment type="subunit">
    <text evidence="1">Homodimer. The RNAP catalytic core consists of 2 alpha, 1 beta, 1 beta' and 1 omega subunit. When a sigma factor is associated with the core the holoenzyme is formed, which can initiate transcription.</text>
</comment>
<comment type="domain">
    <text evidence="1">The N-terminal domain is essential for RNAP assembly and basal transcription, whereas the C-terminal domain is involved in interaction with transcriptional regulators and with upstream promoter elements.</text>
</comment>
<comment type="similarity">
    <text evidence="1">Belongs to the RNA polymerase alpha chain family.</text>
</comment>
<dbReference type="EC" id="2.7.7.6" evidence="1"/>
<dbReference type="EMBL" id="CP000612">
    <property type="protein sequence ID" value="ABO48792.1"/>
    <property type="molecule type" value="Genomic_DNA"/>
</dbReference>
<dbReference type="RefSeq" id="WP_011876630.1">
    <property type="nucleotide sequence ID" value="NC_009253.1"/>
</dbReference>
<dbReference type="SMR" id="A4J139"/>
<dbReference type="STRING" id="349161.Dred_0243"/>
<dbReference type="KEGG" id="drm:Dred_0243"/>
<dbReference type="eggNOG" id="COG0202">
    <property type="taxonomic scope" value="Bacteria"/>
</dbReference>
<dbReference type="HOGENOM" id="CLU_053084_0_1_9"/>
<dbReference type="OrthoDB" id="9805706at2"/>
<dbReference type="Proteomes" id="UP000001556">
    <property type="component" value="Chromosome"/>
</dbReference>
<dbReference type="GO" id="GO:0005737">
    <property type="term" value="C:cytoplasm"/>
    <property type="evidence" value="ECO:0007669"/>
    <property type="project" value="UniProtKB-ARBA"/>
</dbReference>
<dbReference type="GO" id="GO:0000428">
    <property type="term" value="C:DNA-directed RNA polymerase complex"/>
    <property type="evidence" value="ECO:0007669"/>
    <property type="project" value="UniProtKB-KW"/>
</dbReference>
<dbReference type="GO" id="GO:0003677">
    <property type="term" value="F:DNA binding"/>
    <property type="evidence" value="ECO:0007669"/>
    <property type="project" value="UniProtKB-UniRule"/>
</dbReference>
<dbReference type="GO" id="GO:0003899">
    <property type="term" value="F:DNA-directed RNA polymerase activity"/>
    <property type="evidence" value="ECO:0007669"/>
    <property type="project" value="UniProtKB-UniRule"/>
</dbReference>
<dbReference type="GO" id="GO:0046983">
    <property type="term" value="F:protein dimerization activity"/>
    <property type="evidence" value="ECO:0007669"/>
    <property type="project" value="InterPro"/>
</dbReference>
<dbReference type="GO" id="GO:0006351">
    <property type="term" value="P:DNA-templated transcription"/>
    <property type="evidence" value="ECO:0007669"/>
    <property type="project" value="UniProtKB-UniRule"/>
</dbReference>
<dbReference type="CDD" id="cd06928">
    <property type="entry name" value="RNAP_alpha_NTD"/>
    <property type="match status" value="1"/>
</dbReference>
<dbReference type="FunFam" id="1.10.150.20:FF:000001">
    <property type="entry name" value="DNA-directed RNA polymerase subunit alpha"/>
    <property type="match status" value="1"/>
</dbReference>
<dbReference type="FunFam" id="2.170.120.12:FF:000001">
    <property type="entry name" value="DNA-directed RNA polymerase subunit alpha"/>
    <property type="match status" value="1"/>
</dbReference>
<dbReference type="Gene3D" id="1.10.150.20">
    <property type="entry name" value="5' to 3' exonuclease, C-terminal subdomain"/>
    <property type="match status" value="1"/>
</dbReference>
<dbReference type="Gene3D" id="2.170.120.12">
    <property type="entry name" value="DNA-directed RNA polymerase, insert domain"/>
    <property type="match status" value="1"/>
</dbReference>
<dbReference type="Gene3D" id="3.30.1360.10">
    <property type="entry name" value="RNA polymerase, RBP11-like subunit"/>
    <property type="match status" value="1"/>
</dbReference>
<dbReference type="HAMAP" id="MF_00059">
    <property type="entry name" value="RNApol_bact_RpoA"/>
    <property type="match status" value="1"/>
</dbReference>
<dbReference type="InterPro" id="IPR011262">
    <property type="entry name" value="DNA-dir_RNA_pol_insert"/>
</dbReference>
<dbReference type="InterPro" id="IPR011263">
    <property type="entry name" value="DNA-dir_RNA_pol_RpoA/D/Rpb3"/>
</dbReference>
<dbReference type="InterPro" id="IPR011773">
    <property type="entry name" value="DNA-dir_RpoA"/>
</dbReference>
<dbReference type="InterPro" id="IPR036603">
    <property type="entry name" value="RBP11-like"/>
</dbReference>
<dbReference type="InterPro" id="IPR011260">
    <property type="entry name" value="RNAP_asu_C"/>
</dbReference>
<dbReference type="InterPro" id="IPR036643">
    <property type="entry name" value="RNApol_insert_sf"/>
</dbReference>
<dbReference type="NCBIfam" id="NF003513">
    <property type="entry name" value="PRK05182.1-2"/>
    <property type="match status" value="1"/>
</dbReference>
<dbReference type="NCBIfam" id="NF003515">
    <property type="entry name" value="PRK05182.2-1"/>
    <property type="match status" value="1"/>
</dbReference>
<dbReference type="NCBIfam" id="NF003516">
    <property type="entry name" value="PRK05182.2-2"/>
    <property type="match status" value="1"/>
</dbReference>
<dbReference type="NCBIfam" id="NF003519">
    <property type="entry name" value="PRK05182.2-5"/>
    <property type="match status" value="1"/>
</dbReference>
<dbReference type="NCBIfam" id="TIGR02027">
    <property type="entry name" value="rpoA"/>
    <property type="match status" value="1"/>
</dbReference>
<dbReference type="Pfam" id="PF01000">
    <property type="entry name" value="RNA_pol_A_bac"/>
    <property type="match status" value="1"/>
</dbReference>
<dbReference type="Pfam" id="PF03118">
    <property type="entry name" value="RNA_pol_A_CTD"/>
    <property type="match status" value="1"/>
</dbReference>
<dbReference type="Pfam" id="PF01193">
    <property type="entry name" value="RNA_pol_L"/>
    <property type="match status" value="1"/>
</dbReference>
<dbReference type="SMART" id="SM00662">
    <property type="entry name" value="RPOLD"/>
    <property type="match status" value="1"/>
</dbReference>
<dbReference type="SUPFAM" id="SSF47789">
    <property type="entry name" value="C-terminal domain of RNA polymerase alpha subunit"/>
    <property type="match status" value="1"/>
</dbReference>
<dbReference type="SUPFAM" id="SSF56553">
    <property type="entry name" value="Insert subdomain of RNA polymerase alpha subunit"/>
    <property type="match status" value="1"/>
</dbReference>
<dbReference type="SUPFAM" id="SSF55257">
    <property type="entry name" value="RBP11-like subunits of RNA polymerase"/>
    <property type="match status" value="1"/>
</dbReference>
<sequence length="315" mass="35431">MLEIEKPKIEIVEQSEDNTYGKFVVEPLERGYGITLGNSLRRILLSSLPGAAVTSVKIEGVLHEFATVPGVQEDVTDIILNLKNLCLKIHSDEEKVLRVEAQTEGPVTAGDIIHDADVEILNPDLHLATLDTGGRLFMEISVNKGRGYSSAEKNKKGEHIIGVIPIDSIYTPVRRVNYNVENTRVGQITDYDKLTLEVWTNGSIRPDEATSLSAKILSEHLRLFIGLTETVNDVEIMVEKEEEQKDKILEMTIEELDMSVRSYNCLKRAGINTVEELIQRNEEDMMKVRNLGKKSLEEVINKLHELGLSLRQEDE</sequence>
<keyword id="KW-0240">DNA-directed RNA polymerase</keyword>
<keyword id="KW-0548">Nucleotidyltransferase</keyword>
<keyword id="KW-1185">Reference proteome</keyword>
<keyword id="KW-0804">Transcription</keyword>
<keyword id="KW-0808">Transferase</keyword>
<feature type="chain" id="PRO_0000323627" description="DNA-directed RNA polymerase subunit alpha">
    <location>
        <begin position="1"/>
        <end position="315"/>
    </location>
</feature>
<feature type="region of interest" description="Alpha N-terminal domain (alpha-NTD)" evidence="1">
    <location>
        <begin position="1"/>
        <end position="228"/>
    </location>
</feature>
<feature type="region of interest" description="Alpha C-terminal domain (alpha-CTD)" evidence="1">
    <location>
        <begin position="246"/>
        <end position="315"/>
    </location>
</feature>
<gene>
    <name evidence="1" type="primary">rpoA</name>
    <name type="ordered locus">Dred_0243</name>
</gene>
<evidence type="ECO:0000255" key="1">
    <source>
        <dbReference type="HAMAP-Rule" id="MF_00059"/>
    </source>
</evidence>
<name>RPOA_DESRM</name>
<protein>
    <recommendedName>
        <fullName evidence="1">DNA-directed RNA polymerase subunit alpha</fullName>
        <shortName evidence="1">RNAP subunit alpha</shortName>
        <ecNumber evidence="1">2.7.7.6</ecNumber>
    </recommendedName>
    <alternativeName>
        <fullName evidence="1">RNA polymerase subunit alpha</fullName>
    </alternativeName>
    <alternativeName>
        <fullName evidence="1">Transcriptase subunit alpha</fullName>
    </alternativeName>
</protein>